<name>R27AA_ARATH</name>
<keyword id="KW-0963">Cytoplasm</keyword>
<keyword id="KW-1017">Isopeptide bond</keyword>
<keyword id="KW-0479">Metal-binding</keyword>
<keyword id="KW-0539">Nucleus</keyword>
<keyword id="KW-1185">Reference proteome</keyword>
<keyword id="KW-0687">Ribonucleoprotein</keyword>
<keyword id="KW-0689">Ribosomal protein</keyword>
<keyword id="KW-0862">Zinc</keyword>
<keyword id="KW-0863">Zinc-finger</keyword>
<dbReference type="EMBL" id="AC005292">
    <property type="protein sequence ID" value="AAF87001.1"/>
    <property type="molecule type" value="Genomic_DNA"/>
</dbReference>
<dbReference type="EMBL" id="AC007945">
    <property type="protein sequence ID" value="AAF79581.1"/>
    <property type="molecule type" value="Genomic_DNA"/>
</dbReference>
<dbReference type="EMBL" id="CP002684">
    <property type="protein sequence ID" value="AEE30384.1"/>
    <property type="molecule type" value="Genomic_DNA"/>
</dbReference>
<dbReference type="EMBL" id="BT024763">
    <property type="protein sequence ID" value="ABD59101.1"/>
    <property type="molecule type" value="mRNA"/>
</dbReference>
<dbReference type="EMBL" id="AY085389">
    <property type="protein sequence ID" value="AAM62617.1"/>
    <property type="molecule type" value="mRNA"/>
</dbReference>
<dbReference type="PIR" id="H86367">
    <property type="entry name" value="H86367"/>
</dbReference>
<dbReference type="RefSeq" id="NP_173755.1">
    <property type="nucleotide sequence ID" value="NM_102190.3"/>
</dbReference>
<dbReference type="SMR" id="P59271"/>
<dbReference type="BioGRID" id="24188">
    <property type="interactions" value="11"/>
</dbReference>
<dbReference type="FunCoup" id="P59271">
    <property type="interactions" value="2743"/>
</dbReference>
<dbReference type="IntAct" id="P59271">
    <property type="interactions" value="6"/>
</dbReference>
<dbReference type="STRING" id="3702.P59271"/>
<dbReference type="iPTMnet" id="P59271"/>
<dbReference type="MetOSite" id="P59271"/>
<dbReference type="PaxDb" id="3702-AT1G23410.1"/>
<dbReference type="ProteomicsDB" id="236482"/>
<dbReference type="EnsemblPlants" id="AT1G23410.1">
    <property type="protein sequence ID" value="AT1G23410.1"/>
    <property type="gene ID" value="AT1G23410"/>
</dbReference>
<dbReference type="GeneID" id="838949"/>
<dbReference type="Gramene" id="AT1G23410.1">
    <property type="protein sequence ID" value="AT1G23410.1"/>
    <property type="gene ID" value="AT1G23410"/>
</dbReference>
<dbReference type="KEGG" id="ath:AT1G23410"/>
<dbReference type="Araport" id="AT1G23410"/>
<dbReference type="TAIR" id="AT1G23410"/>
<dbReference type="eggNOG" id="KOG0004">
    <property type="taxonomic scope" value="Eukaryota"/>
</dbReference>
<dbReference type="HOGENOM" id="CLU_010412_2_0_1"/>
<dbReference type="InParanoid" id="P59271"/>
<dbReference type="OMA" id="IFINIPY"/>
<dbReference type="OrthoDB" id="1080529at2759"/>
<dbReference type="CD-CODE" id="4299E36E">
    <property type="entry name" value="Nucleolus"/>
</dbReference>
<dbReference type="PRO" id="PR:P59271"/>
<dbReference type="Proteomes" id="UP000006548">
    <property type="component" value="Chromosome 1"/>
</dbReference>
<dbReference type="ExpressionAtlas" id="P59271">
    <property type="expression patterns" value="baseline and differential"/>
</dbReference>
<dbReference type="GO" id="GO:0005829">
    <property type="term" value="C:cytosol"/>
    <property type="evidence" value="ECO:0007005"/>
    <property type="project" value="TAIR"/>
</dbReference>
<dbReference type="GO" id="GO:0022627">
    <property type="term" value="C:cytosolic small ribosomal subunit"/>
    <property type="evidence" value="ECO:0007005"/>
    <property type="project" value="TAIR"/>
</dbReference>
<dbReference type="GO" id="GO:0005794">
    <property type="term" value="C:Golgi apparatus"/>
    <property type="evidence" value="ECO:0007005"/>
    <property type="project" value="TAIR"/>
</dbReference>
<dbReference type="GO" id="GO:0005634">
    <property type="term" value="C:nucleus"/>
    <property type="evidence" value="ECO:0007005"/>
    <property type="project" value="TAIR"/>
</dbReference>
<dbReference type="GO" id="GO:0009506">
    <property type="term" value="C:plasmodesma"/>
    <property type="evidence" value="ECO:0007005"/>
    <property type="project" value="TAIR"/>
</dbReference>
<dbReference type="GO" id="GO:0003729">
    <property type="term" value="F:mRNA binding"/>
    <property type="evidence" value="ECO:0000314"/>
    <property type="project" value="TAIR"/>
</dbReference>
<dbReference type="GO" id="GO:0003735">
    <property type="term" value="F:structural constituent of ribosome"/>
    <property type="evidence" value="ECO:0000314"/>
    <property type="project" value="CAFA"/>
</dbReference>
<dbReference type="GO" id="GO:0008270">
    <property type="term" value="F:zinc ion binding"/>
    <property type="evidence" value="ECO:0007669"/>
    <property type="project" value="UniProtKB-KW"/>
</dbReference>
<dbReference type="GO" id="GO:0006412">
    <property type="term" value="P:translation"/>
    <property type="evidence" value="ECO:0007669"/>
    <property type="project" value="InterPro"/>
</dbReference>
<dbReference type="CDD" id="cd01803">
    <property type="entry name" value="Ubl_ubiquitin"/>
    <property type="match status" value="1"/>
</dbReference>
<dbReference type="FunFam" id="3.10.20.90:FF:000008">
    <property type="entry name" value="Ubiquitin-40S ribosomal protein S27a"/>
    <property type="match status" value="1"/>
</dbReference>
<dbReference type="Gene3D" id="6.20.50.150">
    <property type="match status" value="1"/>
</dbReference>
<dbReference type="Gene3D" id="3.10.20.90">
    <property type="entry name" value="Phosphatidylinositol 3-kinase Catalytic Subunit, Chain A, domain 1"/>
    <property type="match status" value="1"/>
</dbReference>
<dbReference type="InterPro" id="IPR002906">
    <property type="entry name" value="Ribosomal_eS31"/>
</dbReference>
<dbReference type="InterPro" id="IPR038582">
    <property type="entry name" value="Ribosomal_eS31_euk-type_sf"/>
</dbReference>
<dbReference type="InterPro" id="IPR011332">
    <property type="entry name" value="Ribosomal_zn-bd"/>
</dbReference>
<dbReference type="InterPro" id="IPR000626">
    <property type="entry name" value="Ubiquitin-like_dom"/>
</dbReference>
<dbReference type="InterPro" id="IPR029071">
    <property type="entry name" value="Ubiquitin-like_domsf"/>
</dbReference>
<dbReference type="InterPro" id="IPR019954">
    <property type="entry name" value="Ubiquitin_CS"/>
</dbReference>
<dbReference type="InterPro" id="IPR019956">
    <property type="entry name" value="Ubiquitin_dom"/>
</dbReference>
<dbReference type="InterPro" id="IPR050158">
    <property type="entry name" value="Ubiquitin_ubiquitin-like"/>
</dbReference>
<dbReference type="PANTHER" id="PTHR10666">
    <property type="entry name" value="UBIQUITIN"/>
    <property type="match status" value="1"/>
</dbReference>
<dbReference type="Pfam" id="PF01599">
    <property type="entry name" value="Ribosomal_S27"/>
    <property type="match status" value="1"/>
</dbReference>
<dbReference type="Pfam" id="PF00240">
    <property type="entry name" value="ubiquitin"/>
    <property type="match status" value="1"/>
</dbReference>
<dbReference type="PRINTS" id="PR00348">
    <property type="entry name" value="UBIQUITIN"/>
</dbReference>
<dbReference type="SMART" id="SM01402">
    <property type="entry name" value="Ribosomal_S27"/>
    <property type="match status" value="1"/>
</dbReference>
<dbReference type="SMART" id="SM00213">
    <property type="entry name" value="UBQ"/>
    <property type="match status" value="1"/>
</dbReference>
<dbReference type="SUPFAM" id="SSF54236">
    <property type="entry name" value="Ubiquitin-like"/>
    <property type="match status" value="1"/>
</dbReference>
<dbReference type="SUPFAM" id="SSF57829">
    <property type="entry name" value="Zn-binding ribosomal proteins"/>
    <property type="match status" value="1"/>
</dbReference>
<dbReference type="PROSITE" id="PS00299">
    <property type="entry name" value="UBIQUITIN_1"/>
    <property type="match status" value="1"/>
</dbReference>
<dbReference type="PROSITE" id="PS50053">
    <property type="entry name" value="UBIQUITIN_2"/>
    <property type="match status" value="1"/>
</dbReference>
<organism>
    <name type="scientific">Arabidopsis thaliana</name>
    <name type="common">Mouse-ear cress</name>
    <dbReference type="NCBI Taxonomy" id="3702"/>
    <lineage>
        <taxon>Eukaryota</taxon>
        <taxon>Viridiplantae</taxon>
        <taxon>Streptophyta</taxon>
        <taxon>Embryophyta</taxon>
        <taxon>Tracheophyta</taxon>
        <taxon>Spermatophyta</taxon>
        <taxon>Magnoliopsida</taxon>
        <taxon>eudicotyledons</taxon>
        <taxon>Gunneridae</taxon>
        <taxon>Pentapetalae</taxon>
        <taxon>rosids</taxon>
        <taxon>malvids</taxon>
        <taxon>Brassicales</taxon>
        <taxon>Brassicaceae</taxon>
        <taxon>Camelineae</taxon>
        <taxon>Arabidopsis</taxon>
    </lineage>
</organism>
<comment type="function">
    <molecule>Ubiquitin</molecule>
    <text evidence="1">Ubiquitin exists either covalently attached to another protein, or free (unanchored). When covalently bound, it is conjugated to target proteins via an isopeptide bond either as a monomer (monoubiquitin), a polymer linked via different Lys residues of the ubiquitin (polyubiquitin chains) or a linear polymer linked via the initiator Met of the ubiquitin (linear polyubiquitin chains). Polyubiquitin chains, when attached to a target protein, have different functions depending on the Lys residue of the ubiquitin that is linked: Lys-11-linked is involved in ERAD (endoplasmic reticulum-associated degradation) and in cell-cycle regulation; Lys-29-linked is involved in lysosomal degradation; Lys-33-linked is involved in kinase modification; Lys-48-linked is involved in protein degradation via the proteasome; Lys-63-linked is involved in endocytosis, and DNA-damage responses. Linear polymer chains formed via attachment by the initiator Met lead to cell signaling. Ubiquitin is usually conjugated to Lys residues of target proteins, however, in rare cases, conjugation to Cys or Ser residues has been observed. When polyubiquitin is free (unanchored-polyubiquitin), it also has distinct roles, such as in activation of protein kinases, and in signaling (By similarity).</text>
</comment>
<comment type="function">
    <molecule>Small ribosomal subunit protein eS31z</molecule>
    <text>Component of the 40S subunit of the ribosome.</text>
</comment>
<comment type="subunit">
    <molecule>Small ribosomal subunit protein eS31z</molecule>
    <text evidence="1">Part of the 40S ribosomal subunit.</text>
</comment>
<comment type="subcellular location">
    <molecule>Ubiquitin</molecule>
    <subcellularLocation>
        <location evidence="1">Cytoplasm</location>
    </subcellularLocation>
    <subcellularLocation>
        <location evidence="1">Nucleus</location>
    </subcellularLocation>
</comment>
<comment type="subcellular location">
    <molecule>Small ribosomal subunit protein eS31z</molecule>
    <subcellularLocation>
        <location evidence="4">Cytoplasm</location>
    </subcellularLocation>
</comment>
<comment type="miscellaneous">
    <text>Ubiquitin is encoded by 16 different genes. Ubiquitin is generally synthesized as a polyubiquitin precursor with tandem head to tail repeats. Often, there are one to three additional amino acids after the last repeat, removed in the mature protein. Alternatively, ubiquitin extension protein is synthesized as a single copy of ubiquitin fused to a ribosomal protein (either eL40 or eS31) or to a ubiquitin-related protein (either RUB1 or RUB2). Following translation, extension protein is cleaved from ubiquitin.</text>
</comment>
<comment type="similarity">
    <text evidence="4">In the N-terminal section; belongs to the ubiquitin family.</text>
</comment>
<comment type="similarity">
    <text evidence="4">In the C-terminal section; belongs to the eukaryotic ribosomal protein eS31 family.</text>
</comment>
<reference key="1">
    <citation type="journal article" date="2000" name="Nature">
        <title>Sequence and analysis of chromosome 1 of the plant Arabidopsis thaliana.</title>
        <authorList>
            <person name="Theologis A."/>
            <person name="Ecker J.R."/>
            <person name="Palm C.J."/>
            <person name="Federspiel N.A."/>
            <person name="Kaul S."/>
            <person name="White O."/>
            <person name="Alonso J."/>
            <person name="Altafi H."/>
            <person name="Araujo R."/>
            <person name="Bowman C.L."/>
            <person name="Brooks S.Y."/>
            <person name="Buehler E."/>
            <person name="Chan A."/>
            <person name="Chao Q."/>
            <person name="Chen H."/>
            <person name="Cheuk R.F."/>
            <person name="Chin C.W."/>
            <person name="Chung M.K."/>
            <person name="Conn L."/>
            <person name="Conway A.B."/>
            <person name="Conway A.R."/>
            <person name="Creasy T.H."/>
            <person name="Dewar K."/>
            <person name="Dunn P."/>
            <person name="Etgu P."/>
            <person name="Feldblyum T.V."/>
            <person name="Feng J.-D."/>
            <person name="Fong B."/>
            <person name="Fujii C.Y."/>
            <person name="Gill J.E."/>
            <person name="Goldsmith A.D."/>
            <person name="Haas B."/>
            <person name="Hansen N.F."/>
            <person name="Hughes B."/>
            <person name="Huizar L."/>
            <person name="Hunter J.L."/>
            <person name="Jenkins J."/>
            <person name="Johnson-Hopson C."/>
            <person name="Khan S."/>
            <person name="Khaykin E."/>
            <person name="Kim C.J."/>
            <person name="Koo H.L."/>
            <person name="Kremenetskaia I."/>
            <person name="Kurtz D.B."/>
            <person name="Kwan A."/>
            <person name="Lam B."/>
            <person name="Langin-Hooper S."/>
            <person name="Lee A."/>
            <person name="Lee J.M."/>
            <person name="Lenz C.A."/>
            <person name="Li J.H."/>
            <person name="Li Y.-P."/>
            <person name="Lin X."/>
            <person name="Liu S.X."/>
            <person name="Liu Z.A."/>
            <person name="Luros J.S."/>
            <person name="Maiti R."/>
            <person name="Marziali A."/>
            <person name="Militscher J."/>
            <person name="Miranda M."/>
            <person name="Nguyen M."/>
            <person name="Nierman W.C."/>
            <person name="Osborne B.I."/>
            <person name="Pai G."/>
            <person name="Peterson J."/>
            <person name="Pham P.K."/>
            <person name="Rizzo M."/>
            <person name="Rooney T."/>
            <person name="Rowley D."/>
            <person name="Sakano H."/>
            <person name="Salzberg S.L."/>
            <person name="Schwartz J.R."/>
            <person name="Shinn P."/>
            <person name="Southwick A.M."/>
            <person name="Sun H."/>
            <person name="Tallon L.J."/>
            <person name="Tambunga G."/>
            <person name="Toriumi M.J."/>
            <person name="Town C.D."/>
            <person name="Utterback T."/>
            <person name="Van Aken S."/>
            <person name="Vaysberg M."/>
            <person name="Vysotskaia V.S."/>
            <person name="Walker M."/>
            <person name="Wu D."/>
            <person name="Yu G."/>
            <person name="Fraser C.M."/>
            <person name="Venter J.C."/>
            <person name="Davis R.W."/>
        </authorList>
    </citation>
    <scope>NUCLEOTIDE SEQUENCE [LARGE SCALE GENOMIC DNA]</scope>
    <source>
        <strain>cv. Columbia</strain>
    </source>
</reference>
<reference key="2">
    <citation type="journal article" date="2017" name="Plant J.">
        <title>Araport11: a complete reannotation of the Arabidopsis thaliana reference genome.</title>
        <authorList>
            <person name="Cheng C.Y."/>
            <person name="Krishnakumar V."/>
            <person name="Chan A.P."/>
            <person name="Thibaud-Nissen F."/>
            <person name="Schobel S."/>
            <person name="Town C.D."/>
        </authorList>
    </citation>
    <scope>GENOME REANNOTATION</scope>
    <source>
        <strain>cv. Columbia</strain>
    </source>
</reference>
<reference key="3">
    <citation type="submission" date="2006-03" db="EMBL/GenBank/DDBJ databases">
        <title>Arabidopsis ORF clones.</title>
        <authorList>
            <person name="Shinn P."/>
            <person name="Chen H."/>
            <person name="Kim C.J."/>
            <person name="Ecker J.R."/>
        </authorList>
    </citation>
    <scope>NUCLEOTIDE SEQUENCE [LARGE SCALE MRNA]</scope>
    <source>
        <strain>cv. Columbia</strain>
    </source>
</reference>
<reference key="4">
    <citation type="submission" date="2002-03" db="EMBL/GenBank/DDBJ databases">
        <title>Full-length cDNA from Arabidopsis thaliana.</title>
        <authorList>
            <person name="Brover V.V."/>
            <person name="Troukhan M.E."/>
            <person name="Alexandrov N.A."/>
            <person name="Lu Y.-P."/>
            <person name="Flavell R.B."/>
            <person name="Feldmann K.A."/>
        </authorList>
    </citation>
    <scope>NUCLEOTIDE SEQUENCE [LARGE SCALE MRNA]</scope>
</reference>
<reference key="5">
    <citation type="journal article" date="2001" name="Plant Physiol.">
        <title>The organization of cytoplasmic ribosomal protein genes in the Arabidopsis genome.</title>
        <authorList>
            <person name="Barakat A."/>
            <person name="Szick-Miranda K."/>
            <person name="Chang I.-F."/>
            <person name="Guyot R."/>
            <person name="Blanc G."/>
            <person name="Cooke R."/>
            <person name="Delseny M."/>
            <person name="Bailey-Serres J."/>
        </authorList>
    </citation>
    <scope>GENE FAMILY ORGANIZATION</scope>
    <scope>NOMENCLATURE</scope>
</reference>
<reference key="6">
    <citation type="journal article" date="2023" name="Plant Cell">
        <title>An updated nomenclature for plant ribosomal protein genes.</title>
        <authorList>
            <person name="Scarpin M.R."/>
            <person name="Busche M."/>
            <person name="Martinez R.E."/>
            <person name="Harper L.C."/>
            <person name="Reiser L."/>
            <person name="Szakonyi D."/>
            <person name="Merchante C."/>
            <person name="Lan T."/>
            <person name="Xiong W."/>
            <person name="Mo B."/>
            <person name="Tang G."/>
            <person name="Chen X."/>
            <person name="Bailey-Serres J."/>
            <person name="Browning K.S."/>
            <person name="Brunkard J.O."/>
        </authorList>
    </citation>
    <scope>NOMENCLATURE</scope>
</reference>
<sequence length="156" mass="17672">MQIFVKTLTGKTITLEVESSDTIDNVKAKIQDKEGIPPDQQRLIFAGKQLEDGRTLADYNIQKESTLHLVLRLRGGAKKRKKKTYTKPKKIKHTHKKVKLAVLQFYKVDGSGKVQRLKKECPSVSCGPGTFMASHFDRHYCGKCGTTYVFKKADEE</sequence>
<gene>
    <name type="primary">RPS27AA</name>
    <name type="synonym">UBQ16</name>
    <name type="ordered locus">At1g23410</name>
    <name type="ORF">F26F24.28</name>
    <name type="ORF">F28C11.5</name>
</gene>
<evidence type="ECO:0000250" key="1"/>
<evidence type="ECO:0000255" key="2">
    <source>
        <dbReference type="PROSITE-ProRule" id="PRU00214"/>
    </source>
</evidence>
<evidence type="ECO:0000303" key="3">
    <source>
    </source>
</evidence>
<evidence type="ECO:0000305" key="4"/>
<feature type="chain" id="PRO_0000396871" description="Ubiquitin">
    <location>
        <begin position="1"/>
        <end position="76"/>
    </location>
</feature>
<feature type="chain" id="PRO_0000137674" description="Small ribosomal subunit protein eS31z">
    <location>
        <begin position="77"/>
        <end position="156"/>
    </location>
</feature>
<feature type="domain" description="Ubiquitin-like" evidence="2">
    <location>
        <begin position="1"/>
        <end position="76"/>
    </location>
</feature>
<feature type="zinc finger region" description="C4-type">
    <location>
        <begin position="121"/>
        <end position="144"/>
    </location>
</feature>
<feature type="cross-link" description="Glycyl lysine isopeptide (Gly-Lys) (interchain with K-? in acceptor proteins)" evidence="2">
    <location>
        <position position="76"/>
    </location>
</feature>
<proteinExistence type="evidence at transcript level"/>
<accession>P59271</accession>
<accession>O80715</accession>
<accession>P59263</accession>
<accession>Q29PZ3</accession>
<accession>Q38875</accession>
<accession>Q9LDJ2</accession>
<accession>Q9LYW1</accession>
<accession>Q9M0W3</accession>
<accession>Q9M1P9</accession>
<accession>Q9S7X3</accession>
<protein>
    <recommendedName>
        <fullName evidence="4">Ubiquitin-ribosomal protein eS31z fusion protein</fullName>
    </recommendedName>
    <component>
        <recommendedName>
            <fullName>Ubiquitin</fullName>
        </recommendedName>
    </component>
    <component>
        <recommendedName>
            <fullName evidence="3">Small ribosomal subunit protein eS31z</fullName>
        </recommendedName>
        <alternativeName>
            <fullName>40S ribosomal protein S27a-1</fullName>
        </alternativeName>
    </component>
</protein>